<reference key="1">
    <citation type="journal article" date="2000" name="Nature">
        <title>Sequence and analysis of chromosome 3 of the plant Arabidopsis thaliana.</title>
        <authorList>
            <person name="Salanoubat M."/>
            <person name="Lemcke K."/>
            <person name="Rieger M."/>
            <person name="Ansorge W."/>
            <person name="Unseld M."/>
            <person name="Fartmann B."/>
            <person name="Valle G."/>
            <person name="Bloecker H."/>
            <person name="Perez-Alonso M."/>
            <person name="Obermaier B."/>
            <person name="Delseny M."/>
            <person name="Boutry M."/>
            <person name="Grivell L.A."/>
            <person name="Mache R."/>
            <person name="Puigdomenech P."/>
            <person name="De Simone V."/>
            <person name="Choisne N."/>
            <person name="Artiguenave F."/>
            <person name="Robert C."/>
            <person name="Brottier P."/>
            <person name="Wincker P."/>
            <person name="Cattolico L."/>
            <person name="Weissenbach J."/>
            <person name="Saurin W."/>
            <person name="Quetier F."/>
            <person name="Schaefer M."/>
            <person name="Mueller-Auer S."/>
            <person name="Gabel C."/>
            <person name="Fuchs M."/>
            <person name="Benes V."/>
            <person name="Wurmbach E."/>
            <person name="Drzonek H."/>
            <person name="Erfle H."/>
            <person name="Jordan N."/>
            <person name="Bangert S."/>
            <person name="Wiedelmann R."/>
            <person name="Kranz H."/>
            <person name="Voss H."/>
            <person name="Holland R."/>
            <person name="Brandt P."/>
            <person name="Nyakatura G."/>
            <person name="Vezzi A."/>
            <person name="D'Angelo M."/>
            <person name="Pallavicini A."/>
            <person name="Toppo S."/>
            <person name="Simionati B."/>
            <person name="Conrad A."/>
            <person name="Hornischer K."/>
            <person name="Kauer G."/>
            <person name="Loehnert T.-H."/>
            <person name="Nordsiek G."/>
            <person name="Reichelt J."/>
            <person name="Scharfe M."/>
            <person name="Schoen O."/>
            <person name="Bargues M."/>
            <person name="Terol J."/>
            <person name="Climent J."/>
            <person name="Navarro P."/>
            <person name="Collado C."/>
            <person name="Perez-Perez A."/>
            <person name="Ottenwaelder B."/>
            <person name="Duchemin D."/>
            <person name="Cooke R."/>
            <person name="Laudie M."/>
            <person name="Berger-Llauro C."/>
            <person name="Purnelle B."/>
            <person name="Masuy D."/>
            <person name="de Haan M."/>
            <person name="Maarse A.C."/>
            <person name="Alcaraz J.-P."/>
            <person name="Cottet A."/>
            <person name="Casacuberta E."/>
            <person name="Monfort A."/>
            <person name="Argiriou A."/>
            <person name="Flores M."/>
            <person name="Liguori R."/>
            <person name="Vitale D."/>
            <person name="Mannhaupt G."/>
            <person name="Haase D."/>
            <person name="Schoof H."/>
            <person name="Rudd S."/>
            <person name="Zaccaria P."/>
            <person name="Mewes H.-W."/>
            <person name="Mayer K.F.X."/>
            <person name="Kaul S."/>
            <person name="Town C.D."/>
            <person name="Koo H.L."/>
            <person name="Tallon L.J."/>
            <person name="Jenkins J."/>
            <person name="Rooney T."/>
            <person name="Rizzo M."/>
            <person name="Walts A."/>
            <person name="Utterback T."/>
            <person name="Fujii C.Y."/>
            <person name="Shea T.P."/>
            <person name="Creasy T.H."/>
            <person name="Haas B."/>
            <person name="Maiti R."/>
            <person name="Wu D."/>
            <person name="Peterson J."/>
            <person name="Van Aken S."/>
            <person name="Pai G."/>
            <person name="Militscher J."/>
            <person name="Sellers P."/>
            <person name="Gill J.E."/>
            <person name="Feldblyum T.V."/>
            <person name="Preuss D."/>
            <person name="Lin X."/>
            <person name="Nierman W.C."/>
            <person name="Salzberg S.L."/>
            <person name="White O."/>
            <person name="Venter J.C."/>
            <person name="Fraser C.M."/>
            <person name="Kaneko T."/>
            <person name="Nakamura Y."/>
            <person name="Sato S."/>
            <person name="Kato T."/>
            <person name="Asamizu E."/>
            <person name="Sasamoto S."/>
            <person name="Kimura T."/>
            <person name="Idesawa K."/>
            <person name="Kawashima K."/>
            <person name="Kishida Y."/>
            <person name="Kiyokawa C."/>
            <person name="Kohara M."/>
            <person name="Matsumoto M."/>
            <person name="Matsuno A."/>
            <person name="Muraki A."/>
            <person name="Nakayama S."/>
            <person name="Nakazaki N."/>
            <person name="Shinpo S."/>
            <person name="Takeuchi C."/>
            <person name="Wada T."/>
            <person name="Watanabe A."/>
            <person name="Yamada M."/>
            <person name="Yasuda M."/>
            <person name="Tabata S."/>
        </authorList>
    </citation>
    <scope>NUCLEOTIDE SEQUENCE [LARGE SCALE GENOMIC DNA]</scope>
    <source>
        <strain>cv. Columbia</strain>
    </source>
</reference>
<reference key="2">
    <citation type="journal article" date="2017" name="Plant J.">
        <title>Araport11: a complete reannotation of the Arabidopsis thaliana reference genome.</title>
        <authorList>
            <person name="Cheng C.Y."/>
            <person name="Krishnakumar V."/>
            <person name="Chan A.P."/>
            <person name="Thibaud-Nissen F."/>
            <person name="Schobel S."/>
            <person name="Town C.D."/>
        </authorList>
    </citation>
    <scope>GENOME REANNOTATION</scope>
    <source>
        <strain>cv. Columbia</strain>
    </source>
</reference>
<reference key="3">
    <citation type="journal article" date="2004" name="Genome Res.">
        <title>Whole genome sequence comparisons and 'full-length' cDNA sequences: a combined approach to evaluate and improve Arabidopsis genome annotation.</title>
        <authorList>
            <person name="Castelli V."/>
            <person name="Aury J.-M."/>
            <person name="Jaillon O."/>
            <person name="Wincker P."/>
            <person name="Clepet C."/>
            <person name="Menard M."/>
            <person name="Cruaud C."/>
            <person name="Quetier F."/>
            <person name="Scarpelli C."/>
            <person name="Schaechter V."/>
            <person name="Temple G."/>
            <person name="Caboche M."/>
            <person name="Weissenbach J."/>
            <person name="Salanoubat M."/>
        </authorList>
    </citation>
    <scope>NUCLEOTIDE SEQUENCE [LARGE SCALE MRNA]</scope>
    <source>
        <strain>cv. Columbia</strain>
    </source>
</reference>
<reference key="4">
    <citation type="journal article" date="2007" name="Plant Cell">
        <title>Ubiquitin lysine 63 chain forming ligases regulate apical dominance in Arabidopsis.</title>
        <authorList>
            <person name="Yin X.-J."/>
            <person name="Volk S."/>
            <person name="Ljung K."/>
            <person name="Mehlmer N."/>
            <person name="Dolezal K."/>
            <person name="Ditengou F."/>
            <person name="Hanano S."/>
            <person name="Davis S.J."/>
            <person name="Schmelzer E."/>
            <person name="Sandberg G."/>
            <person name="Teige M."/>
            <person name="Palme K."/>
            <person name="Pickart C."/>
            <person name="Bachmair A."/>
        </authorList>
    </citation>
    <scope>IDENTIFICATION</scope>
    <scope>FUNCTION</scope>
    <scope>TISSUE SPECIFICITY</scope>
    <scope>INTERACTION WITH UBC35</scope>
    <scope>DISRUPTION PHENOTYPE</scope>
</reference>
<reference key="5">
    <citation type="journal article" date="2012" name="Plant Physiol.">
        <title>Arabidopsis RGLG2, functioning as a RING E3 ligase, interacts with AtERF53 and negatively regulates the plant drought stress response.</title>
        <authorList>
            <person name="Cheng M.C."/>
            <person name="Hsieh E.J."/>
            <person name="Chen J.H."/>
            <person name="Chen H.Y."/>
            <person name="Lin T.P."/>
        </authorList>
    </citation>
    <scope>FUNCTION</scope>
    <scope>INTERACTION WITH ERF053</scope>
    <scope>SUBCELLULAR LOCATION</scope>
    <scope>DISRUPTION PHENOTYPE</scope>
</reference>
<reference key="6">
    <citation type="journal article" date="2016" name="Plant Cell">
        <title>Ubiquitin ligases RGLG1 and RGLG5 regulate abscisic acid signaling by controlling the turnover of phosphatase PP2CA.</title>
        <authorList>
            <person name="Wu Q."/>
            <person name="Zhang X."/>
            <person name="Peirats-Llobet M."/>
            <person name="Belda-Palazon B."/>
            <person name="Wang X."/>
            <person name="Cui S."/>
            <person name="Yu X."/>
            <person name="Rodriguez P.L."/>
            <person name="An C."/>
        </authorList>
    </citation>
    <scope>FUNCTION</scope>
    <scope>INTERACTION WITH PP2CA</scope>
</reference>
<name>RGLG1_ARATH</name>
<sequence length="489" mass="53312">MGGGNSKEESSSPSSSSWASHQSYPQYGPDSYNYPPPPTYAPAPSPAPAPAPVPAPSPASSYGPQYSQEGYASQPNNPPPPTYAPAPSPASSYGHQYSQEGYASAASQPNYPPPPSQSQVADRKKFDRRYSKISDNYSSLLQVSEALGRAGLESSNLIVGIDFTKSNEWTGAKSFNRKSLHHLSNTPNPYEQAITIIGRTLAAFDEDNLIPCYGFGDASTHDQDVFSFYPEGRFCNGFEEVLARYREIVPQLKLAGPTSFAPIIEMAMTVVEQSSGQYHVLVIIADGQVTRSVDTEHGRLSPQEQKTVDAIVKASTLPLSIVLVGVGDGPWDMMQEFDDNIPARAFDNFQFVNFTEIMSKNKDQSRKETEFALSALMEIPPQYKATIELNLLGVRNGNIPQRIPLPPPVQSGSSFSSSRIPNFEPSVPPYPFESKQMSSADDIQLCPICLSNPKNMAFGCGHQTCCECGPDLKVCPICRAPIQTRIKLY</sequence>
<feature type="initiator methionine" description="Removed" evidence="1">
    <location>
        <position position="1"/>
    </location>
</feature>
<feature type="chain" id="PRO_0000344783" description="E3 ubiquitin-protein ligase RGLG1">
    <location>
        <begin position="2"/>
        <end position="489"/>
    </location>
</feature>
<feature type="domain" description="VWFA" evidence="3">
    <location>
        <begin position="156"/>
        <end position="376"/>
    </location>
</feature>
<feature type="zinc finger region" description="RING-type" evidence="2">
    <location>
        <begin position="446"/>
        <end position="479"/>
    </location>
</feature>
<feature type="region of interest" description="Disordered" evidence="4">
    <location>
        <begin position="1"/>
        <end position="125"/>
    </location>
</feature>
<feature type="compositionally biased region" description="Basic and acidic residues" evidence="4">
    <location>
        <begin position="1"/>
        <end position="10"/>
    </location>
</feature>
<feature type="compositionally biased region" description="Low complexity" evidence="4">
    <location>
        <begin position="11"/>
        <end position="23"/>
    </location>
</feature>
<feature type="compositionally biased region" description="Pro residues" evidence="4">
    <location>
        <begin position="34"/>
        <end position="57"/>
    </location>
</feature>
<feature type="compositionally biased region" description="Low complexity" evidence="4">
    <location>
        <begin position="58"/>
        <end position="75"/>
    </location>
</feature>
<feature type="compositionally biased region" description="Pro residues" evidence="4">
    <location>
        <begin position="76"/>
        <end position="88"/>
    </location>
</feature>
<feature type="lipid moiety-binding region" description="N-myristoyl glycine" evidence="1">
    <location>
        <position position="2"/>
    </location>
</feature>
<feature type="sequence conflict" description="In Ref. 3; BX824117." evidence="9" ref="3">
    <original>P</original>
    <variation>L</variation>
    <location>
        <position position="404"/>
    </location>
</feature>
<feature type="helix" evidence="10">
    <location>
        <begin position="130"/>
        <end position="134"/>
    </location>
</feature>
<feature type="helix" evidence="10">
    <location>
        <begin position="140"/>
        <end position="149"/>
    </location>
</feature>
<feature type="strand" evidence="10">
    <location>
        <begin position="156"/>
        <end position="162"/>
    </location>
</feature>
<feature type="helix" evidence="10">
    <location>
        <begin position="165"/>
        <end position="168"/>
    </location>
</feature>
<feature type="turn" evidence="10">
    <location>
        <begin position="169"/>
        <end position="177"/>
    </location>
</feature>
<feature type="strand" evidence="10">
    <location>
        <begin position="184"/>
        <end position="186"/>
    </location>
</feature>
<feature type="helix" evidence="10">
    <location>
        <begin position="189"/>
        <end position="201"/>
    </location>
</feature>
<feature type="helix" evidence="10">
    <location>
        <begin position="202"/>
        <end position="204"/>
    </location>
</feature>
<feature type="strand" evidence="11">
    <location>
        <begin position="206"/>
        <end position="210"/>
    </location>
</feature>
<feature type="strand" evidence="10">
    <location>
        <begin position="212"/>
        <end position="217"/>
    </location>
</feature>
<feature type="turn" evidence="10">
    <location>
        <begin position="218"/>
        <end position="223"/>
    </location>
</feature>
<feature type="strand" evidence="10">
    <location>
        <begin position="226"/>
        <end position="229"/>
    </location>
</feature>
<feature type="helix" evidence="10">
    <location>
        <begin position="230"/>
        <end position="232"/>
    </location>
</feature>
<feature type="strand" evidence="10">
    <location>
        <begin position="235"/>
        <end position="237"/>
    </location>
</feature>
<feature type="helix" evidence="10">
    <location>
        <begin position="238"/>
        <end position="248"/>
    </location>
</feature>
<feature type="helix" evidence="10">
    <location>
        <begin position="249"/>
        <end position="251"/>
    </location>
</feature>
<feature type="helix" evidence="10">
    <location>
        <begin position="261"/>
        <end position="273"/>
    </location>
</feature>
<feature type="strand" evidence="10">
    <location>
        <begin position="279"/>
        <end position="287"/>
    </location>
</feature>
<feature type="helix" evidence="10">
    <location>
        <begin position="295"/>
        <end position="297"/>
    </location>
</feature>
<feature type="helix" evidence="10">
    <location>
        <begin position="302"/>
        <end position="314"/>
    </location>
</feature>
<feature type="strand" evidence="10">
    <location>
        <begin position="317"/>
        <end position="325"/>
    </location>
</feature>
<feature type="helix" evidence="10">
    <location>
        <begin position="334"/>
        <end position="339"/>
    </location>
</feature>
<feature type="strand" evidence="12">
    <location>
        <begin position="344"/>
        <end position="346"/>
    </location>
</feature>
<feature type="strand" evidence="10">
    <location>
        <begin position="349"/>
        <end position="353"/>
    </location>
</feature>
<feature type="helix" evidence="10">
    <location>
        <begin position="354"/>
        <end position="358"/>
    </location>
</feature>
<feature type="strand" evidence="10">
    <location>
        <begin position="360"/>
        <end position="362"/>
    </location>
</feature>
<feature type="helix" evidence="10">
    <location>
        <begin position="364"/>
        <end position="376"/>
    </location>
</feature>
<feature type="helix" evidence="10">
    <location>
        <begin position="379"/>
        <end position="388"/>
    </location>
</feature>
<gene>
    <name evidence="8" type="primary">RGLG1</name>
    <name type="ordered locus">At3g01650</name>
    <name type="ORF">F4P13.19</name>
</gene>
<dbReference type="EC" id="2.3.2.27" evidence="9"/>
<dbReference type="EMBL" id="AC009325">
    <property type="protein sequence ID" value="AAF01562.1"/>
    <property type="molecule type" value="Genomic_DNA"/>
</dbReference>
<dbReference type="EMBL" id="CP002686">
    <property type="protein sequence ID" value="AEE73699.1"/>
    <property type="molecule type" value="Genomic_DNA"/>
</dbReference>
<dbReference type="EMBL" id="CP002686">
    <property type="protein sequence ID" value="ANM63886.1"/>
    <property type="molecule type" value="Genomic_DNA"/>
</dbReference>
<dbReference type="EMBL" id="BX824117">
    <property type="status" value="NOT_ANNOTATED_CDS"/>
    <property type="molecule type" value="mRNA"/>
</dbReference>
<dbReference type="RefSeq" id="NP_001325948.1">
    <property type="nucleotide sequence ID" value="NM_001337352.1"/>
</dbReference>
<dbReference type="RefSeq" id="NP_186814.1">
    <property type="nucleotide sequence ID" value="NM_111031.4"/>
</dbReference>
<dbReference type="PDB" id="6K82">
    <property type="method" value="X-ray"/>
    <property type="resolution" value="1.40 A"/>
    <property type="chains" value="B=129-419"/>
</dbReference>
<dbReference type="PDB" id="6K83">
    <property type="method" value="X-ray"/>
    <property type="resolution" value="2.39 A"/>
    <property type="chains" value="A/B/C/D/E/F/G/H=129-419"/>
</dbReference>
<dbReference type="PDB" id="6K85">
    <property type="method" value="X-ray"/>
    <property type="resolution" value="1.61 A"/>
    <property type="chains" value="B=129-419"/>
</dbReference>
<dbReference type="PDB" id="6K86">
    <property type="method" value="X-ray"/>
    <property type="resolution" value="1.59 A"/>
    <property type="chains" value="B=129-419"/>
</dbReference>
<dbReference type="PDB" id="6K87">
    <property type="method" value="X-ray"/>
    <property type="resolution" value="1.50 A"/>
    <property type="chains" value="B=129-419"/>
</dbReference>
<dbReference type="PDB" id="6K88">
    <property type="method" value="X-ray"/>
    <property type="resolution" value="1.79 A"/>
    <property type="chains" value="A/B=133-383"/>
</dbReference>
<dbReference type="PDB" id="6K89">
    <property type="method" value="X-ray"/>
    <property type="resolution" value="1.69 A"/>
    <property type="chains" value="B=129-419"/>
</dbReference>
<dbReference type="PDB" id="6K8A">
    <property type="method" value="X-ray"/>
    <property type="resolution" value="2.40 A"/>
    <property type="chains" value="A/B=129-419"/>
</dbReference>
<dbReference type="PDB" id="6K8B">
    <property type="method" value="X-ray"/>
    <property type="resolution" value="2.21 A"/>
    <property type="chains" value="A/B=129-419"/>
</dbReference>
<dbReference type="PDBsum" id="6K82"/>
<dbReference type="PDBsum" id="6K83"/>
<dbReference type="PDBsum" id="6K85"/>
<dbReference type="PDBsum" id="6K86"/>
<dbReference type="PDBsum" id="6K87"/>
<dbReference type="PDBsum" id="6K88"/>
<dbReference type="PDBsum" id="6K89"/>
<dbReference type="PDBsum" id="6K8A"/>
<dbReference type="PDBsum" id="6K8B"/>
<dbReference type="SMR" id="Q9SS90"/>
<dbReference type="BioGRID" id="5246">
    <property type="interactions" value="2"/>
</dbReference>
<dbReference type="FunCoup" id="Q9SS90">
    <property type="interactions" value="290"/>
</dbReference>
<dbReference type="STRING" id="3702.Q9SS90"/>
<dbReference type="PaxDb" id="3702-AT3G01650.1"/>
<dbReference type="ProteomicsDB" id="236888"/>
<dbReference type="EnsemblPlants" id="AT3G01650.1">
    <property type="protein sequence ID" value="AT3G01650.1"/>
    <property type="gene ID" value="AT3G01650"/>
</dbReference>
<dbReference type="EnsemblPlants" id="AT3G01650.2">
    <property type="protein sequence ID" value="AT3G01650.2"/>
    <property type="gene ID" value="AT3G01650"/>
</dbReference>
<dbReference type="GeneID" id="819911"/>
<dbReference type="Gramene" id="AT3G01650.1">
    <property type="protein sequence ID" value="AT3G01650.1"/>
    <property type="gene ID" value="AT3G01650"/>
</dbReference>
<dbReference type="Gramene" id="AT3G01650.2">
    <property type="protein sequence ID" value="AT3G01650.2"/>
    <property type="gene ID" value="AT3G01650"/>
</dbReference>
<dbReference type="KEGG" id="ath:AT3G01650"/>
<dbReference type="Araport" id="AT3G01650"/>
<dbReference type="TAIR" id="AT3G01650">
    <property type="gene designation" value="RGLG1"/>
</dbReference>
<dbReference type="eggNOG" id="KOG1327">
    <property type="taxonomic scope" value="Eukaryota"/>
</dbReference>
<dbReference type="HOGENOM" id="CLU_035766_1_0_1"/>
<dbReference type="InParanoid" id="Q9SS90"/>
<dbReference type="OMA" id="HHIGSDH"/>
<dbReference type="OrthoDB" id="5855668at2759"/>
<dbReference type="PhylomeDB" id="Q9SS90"/>
<dbReference type="PRO" id="PR:Q9SS90"/>
<dbReference type="Proteomes" id="UP000006548">
    <property type="component" value="Chromosome 3"/>
</dbReference>
<dbReference type="ExpressionAtlas" id="Q9SS90">
    <property type="expression patterns" value="baseline and differential"/>
</dbReference>
<dbReference type="GO" id="GO:0005634">
    <property type="term" value="C:nucleus"/>
    <property type="evidence" value="ECO:0000314"/>
    <property type="project" value="TAIR"/>
</dbReference>
<dbReference type="GO" id="GO:0005886">
    <property type="term" value="C:plasma membrane"/>
    <property type="evidence" value="ECO:0000314"/>
    <property type="project" value="TAIR"/>
</dbReference>
<dbReference type="GO" id="GO:0061630">
    <property type="term" value="F:ubiquitin protein ligase activity"/>
    <property type="evidence" value="ECO:0000314"/>
    <property type="project" value="TAIR"/>
</dbReference>
<dbReference type="GO" id="GO:0004842">
    <property type="term" value="F:ubiquitin-protein transferase activity"/>
    <property type="evidence" value="ECO:0000314"/>
    <property type="project" value="TAIR"/>
</dbReference>
<dbReference type="GO" id="GO:0008270">
    <property type="term" value="F:zinc ion binding"/>
    <property type="evidence" value="ECO:0007669"/>
    <property type="project" value="UniProtKB-KW"/>
</dbReference>
<dbReference type="GO" id="GO:0009738">
    <property type="term" value="P:abscisic acid-activated signaling pathway"/>
    <property type="evidence" value="ECO:0007669"/>
    <property type="project" value="UniProtKB-KW"/>
</dbReference>
<dbReference type="GO" id="GO:0080148">
    <property type="term" value="P:negative regulation of response to water deprivation"/>
    <property type="evidence" value="ECO:0000316"/>
    <property type="project" value="TAIR"/>
</dbReference>
<dbReference type="GO" id="GO:0009789">
    <property type="term" value="P:positive regulation of abscisic acid-activated signaling pathway"/>
    <property type="evidence" value="ECO:0000315"/>
    <property type="project" value="UniProtKB"/>
</dbReference>
<dbReference type="GO" id="GO:0070534">
    <property type="term" value="P:protein K63-linked ubiquitination"/>
    <property type="evidence" value="ECO:0000314"/>
    <property type="project" value="UniProtKB"/>
</dbReference>
<dbReference type="CDD" id="cd16729">
    <property type="entry name" value="RING-HC_RGLG_plant"/>
    <property type="match status" value="1"/>
</dbReference>
<dbReference type="FunFam" id="3.30.40.10:FF:000657">
    <property type="entry name" value="E3 ubiquitin-protein ligase RGLG1"/>
    <property type="match status" value="1"/>
</dbReference>
<dbReference type="Gene3D" id="3.30.40.10">
    <property type="entry name" value="Zinc/RING finger domain, C3HC4 (zinc finger)"/>
    <property type="match status" value="1"/>
</dbReference>
<dbReference type="InterPro" id="IPR010734">
    <property type="entry name" value="Copine_C"/>
</dbReference>
<dbReference type="InterPro" id="IPR052079">
    <property type="entry name" value="E3_ligase/Copine_domain"/>
</dbReference>
<dbReference type="InterPro" id="IPR045317">
    <property type="entry name" value="RING-HC_RGLG1/2"/>
</dbReference>
<dbReference type="InterPro" id="IPR002035">
    <property type="entry name" value="VWF_A"/>
</dbReference>
<dbReference type="InterPro" id="IPR036465">
    <property type="entry name" value="vWFA_dom_sf"/>
</dbReference>
<dbReference type="InterPro" id="IPR001841">
    <property type="entry name" value="Znf_RING"/>
</dbReference>
<dbReference type="InterPro" id="IPR013083">
    <property type="entry name" value="Znf_RING/FYVE/PHD"/>
</dbReference>
<dbReference type="PANTHER" id="PTHR45751">
    <property type="entry name" value="COPINE FAMILY PROTEIN 1"/>
    <property type="match status" value="1"/>
</dbReference>
<dbReference type="PANTHER" id="PTHR45751:SF15">
    <property type="entry name" value="E3 UBIQUITIN-PROTEIN LIGASE RGLG1"/>
    <property type="match status" value="1"/>
</dbReference>
<dbReference type="Pfam" id="PF07002">
    <property type="entry name" value="Copine"/>
    <property type="match status" value="1"/>
</dbReference>
<dbReference type="Pfam" id="PF13920">
    <property type="entry name" value="zf-C3HC4_3"/>
    <property type="match status" value="1"/>
</dbReference>
<dbReference type="SMART" id="SM00327">
    <property type="entry name" value="VWA"/>
    <property type="match status" value="1"/>
</dbReference>
<dbReference type="SUPFAM" id="SSF57850">
    <property type="entry name" value="RING/U-box"/>
    <property type="match status" value="1"/>
</dbReference>
<dbReference type="SUPFAM" id="SSF53300">
    <property type="entry name" value="vWA-like"/>
    <property type="match status" value="1"/>
</dbReference>
<dbReference type="PROSITE" id="PS50089">
    <property type="entry name" value="ZF_RING_2"/>
    <property type="match status" value="1"/>
</dbReference>
<keyword id="KW-0002">3D-structure</keyword>
<keyword id="KW-0938">Abscisic acid signaling pathway</keyword>
<keyword id="KW-1003">Cell membrane</keyword>
<keyword id="KW-0449">Lipoprotein</keyword>
<keyword id="KW-0472">Membrane</keyword>
<keyword id="KW-0479">Metal-binding</keyword>
<keyword id="KW-0519">Myristate</keyword>
<keyword id="KW-0539">Nucleus</keyword>
<keyword id="KW-1185">Reference proteome</keyword>
<keyword id="KW-0346">Stress response</keyword>
<keyword id="KW-0808">Transferase</keyword>
<keyword id="KW-0833">Ubl conjugation pathway</keyword>
<keyword id="KW-0862">Zinc</keyword>
<keyword id="KW-0863">Zinc-finger</keyword>
<protein>
    <recommendedName>
        <fullName evidence="9">E3 ubiquitin-protein ligase RGLG1</fullName>
        <ecNumber evidence="9">2.3.2.27</ecNumber>
    </recommendedName>
    <alternativeName>
        <fullName evidence="8">RING domain ligase 1</fullName>
    </alternativeName>
</protein>
<proteinExistence type="evidence at protein level"/>
<accession>Q9SS90</accession>
<organism>
    <name type="scientific">Arabidopsis thaliana</name>
    <name type="common">Mouse-ear cress</name>
    <dbReference type="NCBI Taxonomy" id="3702"/>
    <lineage>
        <taxon>Eukaryota</taxon>
        <taxon>Viridiplantae</taxon>
        <taxon>Streptophyta</taxon>
        <taxon>Embryophyta</taxon>
        <taxon>Tracheophyta</taxon>
        <taxon>Spermatophyta</taxon>
        <taxon>Magnoliopsida</taxon>
        <taxon>eudicotyledons</taxon>
        <taxon>Gunneridae</taxon>
        <taxon>Pentapetalae</taxon>
        <taxon>rosids</taxon>
        <taxon>malvids</taxon>
        <taxon>Brassicales</taxon>
        <taxon>Brassicaceae</taxon>
        <taxon>Camelineae</taxon>
        <taxon>Arabidopsis</taxon>
    </lineage>
</organism>
<evidence type="ECO:0000255" key="1"/>
<evidence type="ECO:0000255" key="2">
    <source>
        <dbReference type="PROSITE-ProRule" id="PRU00175"/>
    </source>
</evidence>
<evidence type="ECO:0000255" key="3">
    <source>
        <dbReference type="PROSITE-ProRule" id="PRU00219"/>
    </source>
</evidence>
<evidence type="ECO:0000256" key="4">
    <source>
        <dbReference type="SAM" id="MobiDB-lite"/>
    </source>
</evidence>
<evidence type="ECO:0000269" key="5">
    <source>
    </source>
</evidence>
<evidence type="ECO:0000269" key="6">
    <source>
    </source>
</evidence>
<evidence type="ECO:0000269" key="7">
    <source>
    </source>
</evidence>
<evidence type="ECO:0000303" key="8">
    <source>
    </source>
</evidence>
<evidence type="ECO:0000305" key="9"/>
<evidence type="ECO:0007829" key="10">
    <source>
        <dbReference type="PDB" id="6K82"/>
    </source>
</evidence>
<evidence type="ECO:0007829" key="11">
    <source>
        <dbReference type="PDB" id="6K88"/>
    </source>
</evidence>
<evidence type="ECO:0007829" key="12">
    <source>
        <dbReference type="PDB" id="6K8B"/>
    </source>
</evidence>
<comment type="function">
    <text evidence="5 6 7">E3 ubiquitin-protein ligase that mediates the formation of 'Lys-63'-linked ubiquitin chains. Regulates apical dominance by acting on the auxin transport proteins abundance (PubMed:17586653). Together with RGLG5, mediates the ubiquitination and subsequent proteasomal degradation of the target protein PP2CA. Functions as a positive regulator of abscisic acid (ABA) signaling through ABA-dependent degradation of PP2CA, a major inhibitor of ABA signaling (PubMed:27577789). Acts as a negative regulator of drought stress response (PubMed:22095047).</text>
</comment>
<comment type="catalytic activity">
    <reaction evidence="9">
        <text>S-ubiquitinyl-[E2 ubiquitin-conjugating enzyme]-L-cysteine + [acceptor protein]-L-lysine = [E2 ubiquitin-conjugating enzyme]-L-cysteine + N(6)-ubiquitinyl-[acceptor protein]-L-lysine.</text>
        <dbReference type="EC" id="2.3.2.27"/>
    </reaction>
</comment>
<comment type="subunit">
    <text evidence="5 6 7">Interacts with the heterodimer UBC35/UEV1B (PubMed:17586653). Interacts with ERF053 (PubMed:22095047). Interacts with PP2CA (PubMed:27577789).</text>
</comment>
<comment type="subcellular location">
    <subcellularLocation>
        <location evidence="9">Cell membrane</location>
        <topology evidence="9">Lipid-anchor</topology>
    </subcellularLocation>
    <subcellularLocation>
        <location evidence="6">Nucleus</location>
    </subcellularLocation>
</comment>
<comment type="tissue specificity">
    <text evidence="5">Ubiquitously expressed.</text>
</comment>
<comment type="PTM">
    <text evidence="9">N-myristoylated.</text>
</comment>
<comment type="disruption phenotype">
    <text evidence="5 6">No visible phenotype; due to the redundancy with RGLG2 (PubMed:17586653, PubMed:22095047). Rglg1 and rglg2 double mutants show a complete loss of apical dominance (PubMed:17586653). The double mutant seedlings rglg1 and rglg2 exhibit a dehydration-tolerant phenotype (PubMed:22095047).</text>
</comment>